<keyword id="KW-1185">Reference proteome</keyword>
<keyword id="KW-0687">Ribonucleoprotein</keyword>
<keyword id="KW-0689">Ribosomal protein</keyword>
<keyword id="KW-0694">RNA-binding</keyword>
<keyword id="KW-0699">rRNA-binding</keyword>
<evidence type="ECO:0000255" key="1">
    <source>
        <dbReference type="HAMAP-Rule" id="MF_01302"/>
    </source>
</evidence>
<evidence type="ECO:0000305" key="2"/>
<dbReference type="EMBL" id="AE005673">
    <property type="protein sequence ID" value="AAK23243.1"/>
    <property type="molecule type" value="Genomic_DNA"/>
</dbReference>
<dbReference type="PIR" id="G87405">
    <property type="entry name" value="G87405"/>
</dbReference>
<dbReference type="RefSeq" id="NP_420075.1">
    <property type="nucleotide sequence ID" value="NC_002696.2"/>
</dbReference>
<dbReference type="RefSeq" id="WP_010919141.1">
    <property type="nucleotide sequence ID" value="NC_002696.2"/>
</dbReference>
<dbReference type="SMR" id="Q9A8T9"/>
<dbReference type="STRING" id="190650.CC_1262"/>
<dbReference type="EnsemblBacteria" id="AAK23243">
    <property type="protein sequence ID" value="AAK23243"/>
    <property type="gene ID" value="CC_1262"/>
</dbReference>
<dbReference type="KEGG" id="ccr:CC_1262"/>
<dbReference type="PATRIC" id="fig|190650.5.peg.1287"/>
<dbReference type="eggNOG" id="COG0096">
    <property type="taxonomic scope" value="Bacteria"/>
</dbReference>
<dbReference type="HOGENOM" id="CLU_098428_0_0_5"/>
<dbReference type="BioCyc" id="CAULO:CC1262-MONOMER"/>
<dbReference type="Proteomes" id="UP000001816">
    <property type="component" value="Chromosome"/>
</dbReference>
<dbReference type="GO" id="GO:1990904">
    <property type="term" value="C:ribonucleoprotein complex"/>
    <property type="evidence" value="ECO:0007669"/>
    <property type="project" value="UniProtKB-KW"/>
</dbReference>
<dbReference type="GO" id="GO:0005840">
    <property type="term" value="C:ribosome"/>
    <property type="evidence" value="ECO:0007669"/>
    <property type="project" value="UniProtKB-KW"/>
</dbReference>
<dbReference type="GO" id="GO:0019843">
    <property type="term" value="F:rRNA binding"/>
    <property type="evidence" value="ECO:0007669"/>
    <property type="project" value="UniProtKB-UniRule"/>
</dbReference>
<dbReference type="GO" id="GO:0003735">
    <property type="term" value="F:structural constituent of ribosome"/>
    <property type="evidence" value="ECO:0007669"/>
    <property type="project" value="InterPro"/>
</dbReference>
<dbReference type="GO" id="GO:0006412">
    <property type="term" value="P:translation"/>
    <property type="evidence" value="ECO:0007669"/>
    <property type="project" value="UniProtKB-UniRule"/>
</dbReference>
<dbReference type="FunFam" id="3.30.1490.10:FF:000001">
    <property type="entry name" value="30S ribosomal protein S8"/>
    <property type="match status" value="1"/>
</dbReference>
<dbReference type="Gene3D" id="3.30.1370.30">
    <property type="match status" value="1"/>
</dbReference>
<dbReference type="Gene3D" id="3.30.1490.10">
    <property type="match status" value="1"/>
</dbReference>
<dbReference type="HAMAP" id="MF_01302_B">
    <property type="entry name" value="Ribosomal_uS8_B"/>
    <property type="match status" value="1"/>
</dbReference>
<dbReference type="InterPro" id="IPR000630">
    <property type="entry name" value="Ribosomal_uS8"/>
</dbReference>
<dbReference type="InterPro" id="IPR047863">
    <property type="entry name" value="Ribosomal_uS8_CS"/>
</dbReference>
<dbReference type="InterPro" id="IPR035987">
    <property type="entry name" value="Ribosomal_uS8_sf"/>
</dbReference>
<dbReference type="NCBIfam" id="NF001109">
    <property type="entry name" value="PRK00136.1"/>
    <property type="match status" value="1"/>
</dbReference>
<dbReference type="PANTHER" id="PTHR11758">
    <property type="entry name" value="40S RIBOSOMAL PROTEIN S15A"/>
    <property type="match status" value="1"/>
</dbReference>
<dbReference type="Pfam" id="PF00410">
    <property type="entry name" value="Ribosomal_S8"/>
    <property type="match status" value="1"/>
</dbReference>
<dbReference type="SUPFAM" id="SSF56047">
    <property type="entry name" value="Ribosomal protein S8"/>
    <property type="match status" value="1"/>
</dbReference>
<dbReference type="PROSITE" id="PS00053">
    <property type="entry name" value="RIBOSOMAL_S8"/>
    <property type="match status" value="1"/>
</dbReference>
<comment type="function">
    <text evidence="1">One of the primary rRNA binding proteins, it binds directly to 16S rRNA central domain where it helps coordinate assembly of the platform of the 30S subunit.</text>
</comment>
<comment type="subunit">
    <text evidence="1">Part of the 30S ribosomal subunit. Contacts proteins S5 and S12.</text>
</comment>
<comment type="similarity">
    <text evidence="1">Belongs to the universal ribosomal protein uS8 family.</text>
</comment>
<accession>Q9A8T9</accession>
<protein>
    <recommendedName>
        <fullName evidence="1">Small ribosomal subunit protein uS8</fullName>
    </recommendedName>
    <alternativeName>
        <fullName evidence="2">30S ribosomal protein S8</fullName>
    </alternativeName>
</protein>
<feature type="chain" id="PRO_0000126389" description="Small ribosomal subunit protein uS8">
    <location>
        <begin position="1"/>
        <end position="132"/>
    </location>
</feature>
<sequence>MSMNDPLSDMIARIKNAAQRKRSKVSTPASKLRARVLDVLADEGYIRGYSLVEKPGAFPEFEIELKYFDGEPVIAEISRVSKPGRRVYSSIKDLKPIKNGLGISILSTPKGVMSDTAARDANVGGEVLCRVY</sequence>
<organism>
    <name type="scientific">Caulobacter vibrioides (strain ATCC 19089 / CIP 103742 / CB 15)</name>
    <name type="common">Caulobacter crescentus</name>
    <dbReference type="NCBI Taxonomy" id="190650"/>
    <lineage>
        <taxon>Bacteria</taxon>
        <taxon>Pseudomonadati</taxon>
        <taxon>Pseudomonadota</taxon>
        <taxon>Alphaproteobacteria</taxon>
        <taxon>Caulobacterales</taxon>
        <taxon>Caulobacteraceae</taxon>
        <taxon>Caulobacter</taxon>
    </lineage>
</organism>
<proteinExistence type="inferred from homology"/>
<gene>
    <name evidence="1" type="primary">rpsH</name>
    <name type="ordered locus">CC_1262</name>
</gene>
<reference key="1">
    <citation type="journal article" date="2001" name="Proc. Natl. Acad. Sci. U.S.A.">
        <title>Complete genome sequence of Caulobacter crescentus.</title>
        <authorList>
            <person name="Nierman W.C."/>
            <person name="Feldblyum T.V."/>
            <person name="Laub M.T."/>
            <person name="Paulsen I.T."/>
            <person name="Nelson K.E."/>
            <person name="Eisen J.A."/>
            <person name="Heidelberg J.F."/>
            <person name="Alley M.R.K."/>
            <person name="Ohta N."/>
            <person name="Maddock J.R."/>
            <person name="Potocka I."/>
            <person name="Nelson W.C."/>
            <person name="Newton A."/>
            <person name="Stephens C."/>
            <person name="Phadke N.D."/>
            <person name="Ely B."/>
            <person name="DeBoy R.T."/>
            <person name="Dodson R.J."/>
            <person name="Durkin A.S."/>
            <person name="Gwinn M.L."/>
            <person name="Haft D.H."/>
            <person name="Kolonay J.F."/>
            <person name="Smit J."/>
            <person name="Craven M.B."/>
            <person name="Khouri H.M."/>
            <person name="Shetty J."/>
            <person name="Berry K.J."/>
            <person name="Utterback T.R."/>
            <person name="Tran K."/>
            <person name="Wolf A.M."/>
            <person name="Vamathevan J.J."/>
            <person name="Ermolaeva M.D."/>
            <person name="White O."/>
            <person name="Salzberg S.L."/>
            <person name="Venter J.C."/>
            <person name="Shapiro L."/>
            <person name="Fraser C.M."/>
        </authorList>
    </citation>
    <scope>NUCLEOTIDE SEQUENCE [LARGE SCALE GENOMIC DNA]</scope>
    <source>
        <strain>ATCC 19089 / CIP 103742 / CB 15</strain>
    </source>
</reference>
<name>RS8_CAUVC</name>